<gene>
    <name evidence="1" type="primary">cheB4</name>
    <name type="ordered locus">BTH_II0506</name>
</gene>
<proteinExistence type="inferred from homology"/>
<protein>
    <recommendedName>
        <fullName evidence="1">Protein-glutamate methylesterase/protein-glutamine glutaminase 4</fullName>
        <ecNumber evidence="1">3.1.1.61</ecNumber>
        <ecNumber evidence="1">3.5.1.44</ecNumber>
    </recommendedName>
</protein>
<evidence type="ECO:0000255" key="1">
    <source>
        <dbReference type="HAMAP-Rule" id="MF_00099"/>
    </source>
</evidence>
<name>CHEB4_BURTA</name>
<keyword id="KW-0145">Chemotaxis</keyword>
<keyword id="KW-0963">Cytoplasm</keyword>
<keyword id="KW-0378">Hydrolase</keyword>
<keyword id="KW-0597">Phosphoprotein</keyword>
<feature type="chain" id="PRO_0000264270" description="Protein-glutamate methylesterase/protein-glutamine glutaminase 4">
    <location>
        <begin position="1"/>
        <end position="342"/>
    </location>
</feature>
<feature type="domain" description="Response regulatory" evidence="1">
    <location>
        <begin position="2"/>
        <end position="119"/>
    </location>
</feature>
<feature type="domain" description="CheB-type methylesterase" evidence="1">
    <location>
        <begin position="144"/>
        <end position="337"/>
    </location>
</feature>
<feature type="active site" evidence="1">
    <location>
        <position position="159"/>
    </location>
</feature>
<feature type="active site" evidence="1">
    <location>
        <position position="186"/>
    </location>
</feature>
<feature type="active site" evidence="1">
    <location>
        <position position="279"/>
    </location>
</feature>
<feature type="modified residue" description="4-aspartylphosphate" evidence="1">
    <location>
        <position position="53"/>
    </location>
</feature>
<comment type="function">
    <text evidence="1">Involved in chemotaxis. Part of a chemotaxis signal transduction system that modulates chemotaxis in response to various stimuli. Catalyzes the demethylation of specific methylglutamate residues introduced into the chemoreceptors (methyl-accepting chemotaxis proteins or MCP) by CheR. Also mediates the irreversible deamidation of specific glutamine residues to glutamic acid.</text>
</comment>
<comment type="catalytic activity">
    <reaction evidence="1">
        <text>[protein]-L-glutamate 5-O-methyl ester + H2O = L-glutamyl-[protein] + methanol + H(+)</text>
        <dbReference type="Rhea" id="RHEA:23236"/>
        <dbReference type="Rhea" id="RHEA-COMP:10208"/>
        <dbReference type="Rhea" id="RHEA-COMP:10311"/>
        <dbReference type="ChEBI" id="CHEBI:15377"/>
        <dbReference type="ChEBI" id="CHEBI:15378"/>
        <dbReference type="ChEBI" id="CHEBI:17790"/>
        <dbReference type="ChEBI" id="CHEBI:29973"/>
        <dbReference type="ChEBI" id="CHEBI:82795"/>
        <dbReference type="EC" id="3.1.1.61"/>
    </reaction>
</comment>
<comment type="catalytic activity">
    <reaction evidence="1">
        <text>L-glutaminyl-[protein] + H2O = L-glutamyl-[protein] + NH4(+)</text>
        <dbReference type="Rhea" id="RHEA:16441"/>
        <dbReference type="Rhea" id="RHEA-COMP:10207"/>
        <dbReference type="Rhea" id="RHEA-COMP:10208"/>
        <dbReference type="ChEBI" id="CHEBI:15377"/>
        <dbReference type="ChEBI" id="CHEBI:28938"/>
        <dbReference type="ChEBI" id="CHEBI:29973"/>
        <dbReference type="ChEBI" id="CHEBI:30011"/>
        <dbReference type="EC" id="3.5.1.44"/>
    </reaction>
</comment>
<comment type="subcellular location">
    <subcellularLocation>
        <location evidence="1">Cytoplasm</location>
    </subcellularLocation>
</comment>
<comment type="domain">
    <text evidence="1">Contains a C-terminal catalytic domain, and an N-terminal region which modulates catalytic activity.</text>
</comment>
<comment type="PTM">
    <text evidence="1">Phosphorylated by CheA. Phosphorylation of the N-terminal regulatory domain activates the methylesterase activity.</text>
</comment>
<comment type="similarity">
    <text evidence="1">Belongs to the CheB family.</text>
</comment>
<reference key="1">
    <citation type="journal article" date="2005" name="BMC Genomics">
        <title>Bacterial genome adaptation to niches: divergence of the potential virulence genes in three Burkholderia species of different survival strategies.</title>
        <authorList>
            <person name="Kim H.S."/>
            <person name="Schell M.A."/>
            <person name="Yu Y."/>
            <person name="Ulrich R.L."/>
            <person name="Sarria S.H."/>
            <person name="Nierman W.C."/>
            <person name="DeShazer D."/>
        </authorList>
    </citation>
    <scope>NUCLEOTIDE SEQUENCE [LARGE SCALE GENOMIC DNA]</scope>
    <source>
        <strain>ATCC 700388 / DSM 13276 / CCUG 48851 / CIP 106301 / E264</strain>
    </source>
</reference>
<accession>Q2T7Z3</accession>
<organism>
    <name type="scientific">Burkholderia thailandensis (strain ATCC 700388 / DSM 13276 / CCUG 48851 / CIP 106301 / E264)</name>
    <dbReference type="NCBI Taxonomy" id="271848"/>
    <lineage>
        <taxon>Bacteria</taxon>
        <taxon>Pseudomonadati</taxon>
        <taxon>Pseudomonadota</taxon>
        <taxon>Betaproteobacteria</taxon>
        <taxon>Burkholderiales</taxon>
        <taxon>Burkholderiaceae</taxon>
        <taxon>Burkholderia</taxon>
        <taxon>pseudomallei group</taxon>
    </lineage>
</organism>
<sequence length="342" mass="35991">MNIGIVNDLPLAVEALRRTIALRPEHRVLWVATDGAQAVDFCVAQPPDLVLMDLVMPRIDGVSATRSIMERSPCAILIVTANVGANASYVYEAMGAGALDAVDTPTLGQGGSADPSQPLLAKIDQIGRLLATRMPAAAPAAAAPAPQGALPPLVAIGASAGGPTALTALLRRLPEDFPAAIVIVQHVDQAFAIGMAQWLDGYSRLPVRIARQGGVPQAGEVLLAATNDHLHLTARGSLAYTRRPEETPYRPSVDVFFHSVVDHWKGEAIGVLLTGMGRDGALGLKAMRTKGHYTIAQDEATSAVYGMPKAAAAIGAASAVLPLERIADQLISLVQRNRQRRR</sequence>
<dbReference type="EC" id="3.1.1.61" evidence="1"/>
<dbReference type="EC" id="3.5.1.44" evidence="1"/>
<dbReference type="EMBL" id="CP000085">
    <property type="protein sequence ID" value="ABC35366.1"/>
    <property type="molecule type" value="Genomic_DNA"/>
</dbReference>
<dbReference type="RefSeq" id="WP_009895514.1">
    <property type="nucleotide sequence ID" value="NZ_CP008786.1"/>
</dbReference>
<dbReference type="SMR" id="Q2T7Z3"/>
<dbReference type="GeneID" id="45117997"/>
<dbReference type="KEGG" id="bte:BTH_II0506"/>
<dbReference type="HOGENOM" id="CLU_000445_51_0_4"/>
<dbReference type="Proteomes" id="UP000001930">
    <property type="component" value="Chromosome II"/>
</dbReference>
<dbReference type="GO" id="GO:0005737">
    <property type="term" value="C:cytoplasm"/>
    <property type="evidence" value="ECO:0007669"/>
    <property type="project" value="UniProtKB-SubCell"/>
</dbReference>
<dbReference type="GO" id="GO:0000156">
    <property type="term" value="F:phosphorelay response regulator activity"/>
    <property type="evidence" value="ECO:0007669"/>
    <property type="project" value="InterPro"/>
</dbReference>
<dbReference type="GO" id="GO:0008984">
    <property type="term" value="F:protein-glutamate methylesterase activity"/>
    <property type="evidence" value="ECO:0007669"/>
    <property type="project" value="UniProtKB-UniRule"/>
</dbReference>
<dbReference type="GO" id="GO:0050568">
    <property type="term" value="F:protein-glutamine glutaminase activity"/>
    <property type="evidence" value="ECO:0007669"/>
    <property type="project" value="UniProtKB-UniRule"/>
</dbReference>
<dbReference type="GO" id="GO:0006935">
    <property type="term" value="P:chemotaxis"/>
    <property type="evidence" value="ECO:0007669"/>
    <property type="project" value="UniProtKB-UniRule"/>
</dbReference>
<dbReference type="CDD" id="cd16432">
    <property type="entry name" value="CheB_Rec"/>
    <property type="match status" value="1"/>
</dbReference>
<dbReference type="CDD" id="cd17541">
    <property type="entry name" value="REC_CheB-like"/>
    <property type="match status" value="1"/>
</dbReference>
<dbReference type="Gene3D" id="3.40.50.2300">
    <property type="match status" value="1"/>
</dbReference>
<dbReference type="Gene3D" id="3.40.50.180">
    <property type="entry name" value="Methylesterase CheB, C-terminal domain"/>
    <property type="match status" value="1"/>
</dbReference>
<dbReference type="HAMAP" id="MF_00099">
    <property type="entry name" value="CheB_chemtxs"/>
    <property type="match status" value="1"/>
</dbReference>
<dbReference type="InterPro" id="IPR008248">
    <property type="entry name" value="CheB-like"/>
</dbReference>
<dbReference type="InterPro" id="IPR035909">
    <property type="entry name" value="CheB_C"/>
</dbReference>
<dbReference type="InterPro" id="IPR011006">
    <property type="entry name" value="CheY-like_superfamily"/>
</dbReference>
<dbReference type="InterPro" id="IPR000673">
    <property type="entry name" value="Sig_transdc_resp-reg_Me-estase"/>
</dbReference>
<dbReference type="InterPro" id="IPR001789">
    <property type="entry name" value="Sig_transdc_resp-reg_receiver"/>
</dbReference>
<dbReference type="NCBIfam" id="NF009206">
    <property type="entry name" value="PRK12555.1"/>
    <property type="match status" value="1"/>
</dbReference>
<dbReference type="PANTHER" id="PTHR42872">
    <property type="entry name" value="PROTEIN-GLUTAMATE METHYLESTERASE/PROTEIN-GLUTAMINE GLUTAMINASE"/>
    <property type="match status" value="1"/>
</dbReference>
<dbReference type="PANTHER" id="PTHR42872:SF6">
    <property type="entry name" value="PROTEIN-GLUTAMATE METHYLESTERASE_PROTEIN-GLUTAMINE GLUTAMINASE"/>
    <property type="match status" value="1"/>
</dbReference>
<dbReference type="Pfam" id="PF01339">
    <property type="entry name" value="CheB_methylest"/>
    <property type="match status" value="1"/>
</dbReference>
<dbReference type="Pfam" id="PF00072">
    <property type="entry name" value="Response_reg"/>
    <property type="match status" value="1"/>
</dbReference>
<dbReference type="PIRSF" id="PIRSF000876">
    <property type="entry name" value="RR_chemtxs_CheB"/>
    <property type="match status" value="1"/>
</dbReference>
<dbReference type="SMART" id="SM00448">
    <property type="entry name" value="REC"/>
    <property type="match status" value="1"/>
</dbReference>
<dbReference type="SUPFAM" id="SSF52172">
    <property type="entry name" value="CheY-like"/>
    <property type="match status" value="1"/>
</dbReference>
<dbReference type="SUPFAM" id="SSF52738">
    <property type="entry name" value="Methylesterase CheB, C-terminal domain"/>
    <property type="match status" value="1"/>
</dbReference>
<dbReference type="PROSITE" id="PS50122">
    <property type="entry name" value="CHEB"/>
    <property type="match status" value="1"/>
</dbReference>
<dbReference type="PROSITE" id="PS50110">
    <property type="entry name" value="RESPONSE_REGULATORY"/>
    <property type="match status" value="1"/>
</dbReference>